<sequence length="63" mass="7328">MKSERAKQIIDSKKYIPVYYKNTPVHIEKVDNKENIAHIKSLNTDKEIVVNVKTLSECNKLNN</sequence>
<comment type="subcellular location">
    <subcellularLocation>
        <location evidence="1">Spore core</location>
    </subcellularLocation>
</comment>
<comment type="similarity">
    <text evidence="1">Belongs to the SspH family.</text>
</comment>
<dbReference type="EMBL" id="CP000728">
    <property type="protein sequence ID" value="ABS39998.1"/>
    <property type="molecule type" value="Genomic_DNA"/>
</dbReference>
<dbReference type="RefSeq" id="WP_003400937.1">
    <property type="nucleotide sequence ID" value="NC_009699.1"/>
</dbReference>
<dbReference type="SMR" id="A7GCS6"/>
<dbReference type="KEGG" id="cbf:CLI_1321"/>
<dbReference type="HOGENOM" id="CLU_191960_1_0_9"/>
<dbReference type="Proteomes" id="UP000002410">
    <property type="component" value="Chromosome"/>
</dbReference>
<dbReference type="GO" id="GO:0042601">
    <property type="term" value="C:endospore-forming forespore"/>
    <property type="evidence" value="ECO:0007669"/>
    <property type="project" value="InterPro"/>
</dbReference>
<dbReference type="GO" id="GO:0030436">
    <property type="term" value="P:asexual sporulation"/>
    <property type="evidence" value="ECO:0007669"/>
    <property type="project" value="UniProtKB-UniRule"/>
</dbReference>
<dbReference type="GO" id="GO:0030435">
    <property type="term" value="P:sporulation resulting in formation of a cellular spore"/>
    <property type="evidence" value="ECO:0007669"/>
    <property type="project" value="UniProtKB-KW"/>
</dbReference>
<dbReference type="HAMAP" id="MF_00667">
    <property type="entry name" value="SspH"/>
    <property type="match status" value="1"/>
</dbReference>
<dbReference type="InterPro" id="IPR012610">
    <property type="entry name" value="SASP_SspH"/>
</dbReference>
<dbReference type="NCBIfam" id="TIGR02861">
    <property type="entry name" value="SASP_H"/>
    <property type="match status" value="1"/>
</dbReference>
<dbReference type="Pfam" id="PF08141">
    <property type="entry name" value="SspH"/>
    <property type="match status" value="1"/>
</dbReference>
<accession>A7GCS6</accession>
<feature type="chain" id="PRO_0000329131" description="Small, acid-soluble spore protein H 2">
    <location>
        <begin position="1"/>
        <end position="63"/>
    </location>
</feature>
<evidence type="ECO:0000255" key="1">
    <source>
        <dbReference type="HAMAP-Rule" id="MF_00667"/>
    </source>
</evidence>
<protein>
    <recommendedName>
        <fullName evidence="1">Small, acid-soluble spore protein H 2</fullName>
        <shortName evidence="1">SASP H 2</shortName>
    </recommendedName>
</protein>
<proteinExistence type="inferred from homology"/>
<name>SSPH2_CLOBL</name>
<gene>
    <name evidence="1" type="primary">sspH2</name>
    <name type="ordered locus">CLI_1321</name>
</gene>
<keyword id="KW-0749">Sporulation</keyword>
<reference key="1">
    <citation type="submission" date="2007-06" db="EMBL/GenBank/DDBJ databases">
        <authorList>
            <person name="Brinkac L.M."/>
            <person name="Daugherty S."/>
            <person name="Dodson R.J."/>
            <person name="Madupu R."/>
            <person name="Brown J.L."/>
            <person name="Bruce D."/>
            <person name="Detter C."/>
            <person name="Munk C."/>
            <person name="Smith L.A."/>
            <person name="Smith T.J."/>
            <person name="White O."/>
            <person name="Brettin T.S."/>
        </authorList>
    </citation>
    <scope>NUCLEOTIDE SEQUENCE [LARGE SCALE GENOMIC DNA]</scope>
    <source>
        <strain>Langeland / NCTC 10281 / Type F</strain>
    </source>
</reference>
<organism>
    <name type="scientific">Clostridium botulinum (strain Langeland / NCTC 10281 / Type F)</name>
    <dbReference type="NCBI Taxonomy" id="441772"/>
    <lineage>
        <taxon>Bacteria</taxon>
        <taxon>Bacillati</taxon>
        <taxon>Bacillota</taxon>
        <taxon>Clostridia</taxon>
        <taxon>Eubacteriales</taxon>
        <taxon>Clostridiaceae</taxon>
        <taxon>Clostridium</taxon>
    </lineage>
</organism>